<reference key="1">
    <citation type="journal article" date="1996" name="DNA Res.">
        <title>Sequence analysis of the genome of the unicellular cyanobacterium Synechocystis sp. strain PCC6803. II. Sequence determination of the entire genome and assignment of potential protein-coding regions.</title>
        <authorList>
            <person name="Kaneko T."/>
            <person name="Sato S."/>
            <person name="Kotani H."/>
            <person name="Tanaka A."/>
            <person name="Asamizu E."/>
            <person name="Nakamura Y."/>
            <person name="Miyajima N."/>
            <person name="Hirosawa M."/>
            <person name="Sugiura M."/>
            <person name="Sasamoto S."/>
            <person name="Kimura T."/>
            <person name="Hosouchi T."/>
            <person name="Matsuno A."/>
            <person name="Muraki A."/>
            <person name="Nakazaki N."/>
            <person name="Naruo K."/>
            <person name="Okumura S."/>
            <person name="Shimpo S."/>
            <person name="Takeuchi C."/>
            <person name="Wada T."/>
            <person name="Watanabe A."/>
            <person name="Yamada M."/>
            <person name="Yasuda M."/>
            <person name="Tabata S."/>
        </authorList>
    </citation>
    <scope>NUCLEOTIDE SEQUENCE [LARGE SCALE GENOMIC DNA]</scope>
    <source>
        <strain>ATCC 27184 / PCC 6803 / Kazusa</strain>
    </source>
</reference>
<comment type="function">
    <text evidence="1">Allows the formation of correctly charged Asn-tRNA(Asn) or Gln-tRNA(Gln) through the transamidation of misacylated Asp-tRNA(Asn) or Glu-tRNA(Gln) in organisms which lack either or both of asparaginyl-tRNA or glutaminyl-tRNA synthetases. The reaction takes place in the presence of glutamine and ATP through an activated phospho-Asp-tRNA(Asn) or phospho-Glu-tRNA(Gln) (By similarity).</text>
</comment>
<comment type="catalytic activity">
    <reaction>
        <text>L-glutamyl-tRNA(Gln) + L-glutamine + ATP + H2O = L-glutaminyl-tRNA(Gln) + L-glutamate + ADP + phosphate + H(+)</text>
        <dbReference type="Rhea" id="RHEA:17521"/>
        <dbReference type="Rhea" id="RHEA-COMP:9681"/>
        <dbReference type="Rhea" id="RHEA-COMP:9684"/>
        <dbReference type="ChEBI" id="CHEBI:15377"/>
        <dbReference type="ChEBI" id="CHEBI:15378"/>
        <dbReference type="ChEBI" id="CHEBI:29985"/>
        <dbReference type="ChEBI" id="CHEBI:30616"/>
        <dbReference type="ChEBI" id="CHEBI:43474"/>
        <dbReference type="ChEBI" id="CHEBI:58359"/>
        <dbReference type="ChEBI" id="CHEBI:78520"/>
        <dbReference type="ChEBI" id="CHEBI:78521"/>
        <dbReference type="ChEBI" id="CHEBI:456216"/>
    </reaction>
</comment>
<comment type="catalytic activity">
    <reaction>
        <text>L-aspartyl-tRNA(Asn) + L-glutamine + ATP + H2O = L-asparaginyl-tRNA(Asn) + L-glutamate + ADP + phosphate + 2 H(+)</text>
        <dbReference type="Rhea" id="RHEA:14513"/>
        <dbReference type="Rhea" id="RHEA-COMP:9674"/>
        <dbReference type="Rhea" id="RHEA-COMP:9677"/>
        <dbReference type="ChEBI" id="CHEBI:15377"/>
        <dbReference type="ChEBI" id="CHEBI:15378"/>
        <dbReference type="ChEBI" id="CHEBI:29985"/>
        <dbReference type="ChEBI" id="CHEBI:30616"/>
        <dbReference type="ChEBI" id="CHEBI:43474"/>
        <dbReference type="ChEBI" id="CHEBI:58359"/>
        <dbReference type="ChEBI" id="CHEBI:78515"/>
        <dbReference type="ChEBI" id="CHEBI:78516"/>
        <dbReference type="ChEBI" id="CHEBI:456216"/>
    </reaction>
</comment>
<comment type="subunit">
    <text evidence="1">Heterotrimer of A, B and C subunits.</text>
</comment>
<comment type="similarity">
    <text evidence="2">Belongs to the GatB/GatE family. GatB subfamily.</text>
</comment>
<comment type="sequence caution" evidence="2">
    <conflict type="erroneous initiation">
        <sequence resource="EMBL-CDS" id="BAA18309"/>
    </conflict>
</comment>
<evidence type="ECO:0000250" key="1"/>
<evidence type="ECO:0000305" key="2"/>
<proteinExistence type="inferred from homology"/>
<feature type="chain" id="PRO_0000148856" description="Aspartyl/glutamyl-tRNA(Asn/Gln) amidotransferase subunit B">
    <location>
        <begin position="1"/>
        <end position="495"/>
    </location>
</feature>
<gene>
    <name type="primary">gatB</name>
    <name type="ordered locus">sll1435</name>
</gene>
<organism>
    <name type="scientific">Synechocystis sp. (strain ATCC 27184 / PCC 6803 / Kazusa)</name>
    <dbReference type="NCBI Taxonomy" id="1111708"/>
    <lineage>
        <taxon>Bacteria</taxon>
        <taxon>Bacillati</taxon>
        <taxon>Cyanobacteriota</taxon>
        <taxon>Cyanophyceae</taxon>
        <taxon>Synechococcales</taxon>
        <taxon>Merismopediaceae</taxon>
        <taxon>Synechocystis</taxon>
    </lineage>
</organism>
<sequence>MTATAVKTDYEAIIGLETHCQLNTASKIFCNCSTDFDSPPNTNVCPVCLGYPGVLPVLNEEVLAAAVKLGLAINGQIAPYSKFDRKQYFYPDLPKNYQISQFDLPIVEHGSLEIELVDKKTKEITRKTIGITRLHMEEDAGKLVHAGSDRLAGSTHSLVDFNRTGVPLLEIVSEPDLRTGQEAAEYAQSLRQLVRYLGISDGNMQEGSLRCDVNISVRPVGQKEFGTKVEIKNMNSFSAIQKAIEYEIERQIKAIADGEEIYQETRLWEEGSQRTISMRKKEGSSDYRYFPEPDLPPLEVSEQQKQTWFATLPELPSAKRARYEQKLGLSAYDARVLTEDRDVALYFEEAVNAGADPKAVANWVTQDIAAYLNNNRLTISGLALKPSALAELIDLITKGTISGKIAKDILPELLEKGGSPQKIIEARGLVQISDPDELTAIIQAVIADHPKELEKFRSGKGNMQGFFVGQVMKRTGGKADPKLTNQLIGKLLAQA</sequence>
<accession>P74215</accession>
<protein>
    <recommendedName>
        <fullName>Aspartyl/glutamyl-tRNA(Asn/Gln) amidotransferase subunit B</fullName>
        <shortName>Asp/Glu-ADT subunit B</shortName>
        <ecNumber>6.3.5.-</ecNumber>
    </recommendedName>
</protein>
<keyword id="KW-0067">ATP-binding</keyword>
<keyword id="KW-0436">Ligase</keyword>
<keyword id="KW-0547">Nucleotide-binding</keyword>
<keyword id="KW-0648">Protein biosynthesis</keyword>
<keyword id="KW-1185">Reference proteome</keyword>
<dbReference type="EC" id="6.3.5.-"/>
<dbReference type="EMBL" id="BA000022">
    <property type="protein sequence ID" value="BAA18309.1"/>
    <property type="status" value="ALT_INIT"/>
    <property type="molecule type" value="Genomic_DNA"/>
</dbReference>
<dbReference type="PIR" id="S75850">
    <property type="entry name" value="S75850"/>
</dbReference>
<dbReference type="SMR" id="P74215"/>
<dbReference type="FunCoup" id="P74215">
    <property type="interactions" value="488"/>
</dbReference>
<dbReference type="IntAct" id="P74215">
    <property type="interactions" value="4"/>
</dbReference>
<dbReference type="STRING" id="1148.gene:10499185"/>
<dbReference type="PaxDb" id="1148-1653395"/>
<dbReference type="EnsemblBacteria" id="BAA18309">
    <property type="protein sequence ID" value="BAA18309"/>
    <property type="gene ID" value="BAA18309"/>
</dbReference>
<dbReference type="KEGG" id="syn:sll1435"/>
<dbReference type="eggNOG" id="COG0064">
    <property type="taxonomic scope" value="Bacteria"/>
</dbReference>
<dbReference type="InParanoid" id="P74215"/>
<dbReference type="PhylomeDB" id="P74215"/>
<dbReference type="Proteomes" id="UP000001425">
    <property type="component" value="Chromosome"/>
</dbReference>
<dbReference type="GO" id="GO:0050566">
    <property type="term" value="F:asparaginyl-tRNA synthase (glutamine-hydrolyzing) activity"/>
    <property type="evidence" value="ECO:0007669"/>
    <property type="project" value="RHEA"/>
</dbReference>
<dbReference type="GO" id="GO:0005524">
    <property type="term" value="F:ATP binding"/>
    <property type="evidence" value="ECO:0007669"/>
    <property type="project" value="UniProtKB-KW"/>
</dbReference>
<dbReference type="GO" id="GO:0050567">
    <property type="term" value="F:glutaminyl-tRNA synthase (glutamine-hydrolyzing) activity"/>
    <property type="evidence" value="ECO:0000318"/>
    <property type="project" value="GO_Central"/>
</dbReference>
<dbReference type="GO" id="GO:0070681">
    <property type="term" value="P:glutaminyl-tRNAGln biosynthesis via transamidation"/>
    <property type="evidence" value="ECO:0000318"/>
    <property type="project" value="GO_Central"/>
</dbReference>
<dbReference type="GO" id="GO:0006412">
    <property type="term" value="P:translation"/>
    <property type="evidence" value="ECO:0007669"/>
    <property type="project" value="UniProtKB-UniRule"/>
</dbReference>
<dbReference type="FunFam" id="1.10.10.410:FF:000001">
    <property type="entry name" value="Aspartyl/glutamyl-tRNA(Asn/Gln) amidotransferase subunit B"/>
    <property type="match status" value="1"/>
</dbReference>
<dbReference type="FunFam" id="1.10.150.380:FF:000001">
    <property type="entry name" value="Aspartyl/glutamyl-tRNA(Asn/Gln) amidotransferase subunit B"/>
    <property type="match status" value="1"/>
</dbReference>
<dbReference type="Gene3D" id="1.10.10.410">
    <property type="match status" value="1"/>
</dbReference>
<dbReference type="Gene3D" id="1.10.150.380">
    <property type="entry name" value="GatB domain, N-terminal subdomain"/>
    <property type="match status" value="1"/>
</dbReference>
<dbReference type="HAMAP" id="MF_00121">
    <property type="entry name" value="GatB"/>
    <property type="match status" value="1"/>
</dbReference>
<dbReference type="InterPro" id="IPR017959">
    <property type="entry name" value="Asn/Gln-tRNA_amidoTrfase_suB/E"/>
</dbReference>
<dbReference type="InterPro" id="IPR006075">
    <property type="entry name" value="Asn/Gln-tRNA_Trfase_suB/E_cat"/>
</dbReference>
<dbReference type="InterPro" id="IPR018027">
    <property type="entry name" value="Asn/Gln_amidotransferase"/>
</dbReference>
<dbReference type="InterPro" id="IPR003789">
    <property type="entry name" value="Asn/Gln_tRNA_amidoTrase-B-like"/>
</dbReference>
<dbReference type="InterPro" id="IPR004413">
    <property type="entry name" value="GatB"/>
</dbReference>
<dbReference type="InterPro" id="IPR042114">
    <property type="entry name" value="GatB_C_1"/>
</dbReference>
<dbReference type="InterPro" id="IPR023168">
    <property type="entry name" value="GatB_Yqey_C_2"/>
</dbReference>
<dbReference type="InterPro" id="IPR017958">
    <property type="entry name" value="Gln-tRNA_amidoTrfase_suB_CS"/>
</dbReference>
<dbReference type="InterPro" id="IPR014746">
    <property type="entry name" value="Gln_synth/guanido_kin_cat_dom"/>
</dbReference>
<dbReference type="NCBIfam" id="TIGR00133">
    <property type="entry name" value="gatB"/>
    <property type="match status" value="1"/>
</dbReference>
<dbReference type="NCBIfam" id="NF004012">
    <property type="entry name" value="PRK05477.1-2"/>
    <property type="match status" value="1"/>
</dbReference>
<dbReference type="NCBIfam" id="NF004014">
    <property type="entry name" value="PRK05477.1-4"/>
    <property type="match status" value="1"/>
</dbReference>
<dbReference type="PANTHER" id="PTHR11659">
    <property type="entry name" value="GLUTAMYL-TRNA GLN AMIDOTRANSFERASE SUBUNIT B MITOCHONDRIAL AND PROKARYOTIC PET112-RELATED"/>
    <property type="match status" value="1"/>
</dbReference>
<dbReference type="PANTHER" id="PTHR11659:SF0">
    <property type="entry name" value="GLUTAMYL-TRNA(GLN) AMIDOTRANSFERASE SUBUNIT B, MITOCHONDRIAL"/>
    <property type="match status" value="1"/>
</dbReference>
<dbReference type="Pfam" id="PF02934">
    <property type="entry name" value="GatB_N"/>
    <property type="match status" value="1"/>
</dbReference>
<dbReference type="Pfam" id="PF02637">
    <property type="entry name" value="GatB_Yqey"/>
    <property type="match status" value="1"/>
</dbReference>
<dbReference type="SMART" id="SM00845">
    <property type="entry name" value="GatB_Yqey"/>
    <property type="match status" value="1"/>
</dbReference>
<dbReference type="SUPFAM" id="SSF89095">
    <property type="entry name" value="GatB/YqeY motif"/>
    <property type="match status" value="1"/>
</dbReference>
<dbReference type="SUPFAM" id="SSF55931">
    <property type="entry name" value="Glutamine synthetase/guanido kinase"/>
    <property type="match status" value="1"/>
</dbReference>
<dbReference type="PROSITE" id="PS01234">
    <property type="entry name" value="GATB"/>
    <property type="match status" value="1"/>
</dbReference>
<name>GATB_SYNY3</name>